<name>TRPCD_ARCFU</name>
<evidence type="ECO:0000250" key="1"/>
<evidence type="ECO:0000255" key="2">
    <source>
        <dbReference type="HAMAP-Rule" id="MF_00211"/>
    </source>
</evidence>
<evidence type="ECO:0000305" key="3"/>
<accession>O28668</accession>
<keyword id="KW-0028">Amino-acid biosynthesis</keyword>
<keyword id="KW-0057">Aromatic amino acid biosynthesis</keyword>
<keyword id="KW-0210">Decarboxylase</keyword>
<keyword id="KW-0328">Glycosyltransferase</keyword>
<keyword id="KW-0456">Lyase</keyword>
<keyword id="KW-0460">Magnesium</keyword>
<keyword id="KW-0479">Metal-binding</keyword>
<keyword id="KW-0511">Multifunctional enzyme</keyword>
<keyword id="KW-1185">Reference proteome</keyword>
<keyword id="KW-0808">Transferase</keyword>
<keyword id="KW-0822">Tryptophan biosynthesis</keyword>
<proteinExistence type="inferred from homology"/>
<protein>
    <recommendedName>
        <fullName>Tryptophan biosynthesis protein TrpCD</fullName>
    </recommendedName>
    <domain>
        <recommendedName>
            <fullName>Indole-3-glycerol phosphate synthase</fullName>
            <shortName>IGPS</shortName>
            <ecNumber>4.1.1.48</ecNumber>
        </recommendedName>
    </domain>
    <domain>
        <recommendedName>
            <fullName evidence="2">Anthranilate phosphoribosyltransferase</fullName>
            <ecNumber evidence="2">2.4.2.18</ecNumber>
        </recommendedName>
    </domain>
</protein>
<dbReference type="EC" id="4.1.1.48"/>
<dbReference type="EC" id="2.4.2.18" evidence="2"/>
<dbReference type="EMBL" id="AE000782">
    <property type="protein sequence ID" value="AAB89645.1"/>
    <property type="molecule type" value="Genomic_DNA"/>
</dbReference>
<dbReference type="PIR" id="C69450">
    <property type="entry name" value="C69450"/>
</dbReference>
<dbReference type="SMR" id="O28668"/>
<dbReference type="STRING" id="224325.AF_1604"/>
<dbReference type="PaxDb" id="224325-AF_1604"/>
<dbReference type="EnsemblBacteria" id="AAB89645">
    <property type="protein sequence ID" value="AAB89645"/>
    <property type="gene ID" value="AF_1604"/>
</dbReference>
<dbReference type="KEGG" id="afu:AF_1604"/>
<dbReference type="eggNOG" id="arCOG01088">
    <property type="taxonomic scope" value="Archaea"/>
</dbReference>
<dbReference type="eggNOG" id="arCOG02012">
    <property type="taxonomic scope" value="Archaea"/>
</dbReference>
<dbReference type="HOGENOM" id="CLU_498410_0_0_2"/>
<dbReference type="PhylomeDB" id="O28668"/>
<dbReference type="UniPathway" id="UPA00035">
    <property type="reaction ID" value="UER00041"/>
</dbReference>
<dbReference type="UniPathway" id="UPA00035">
    <property type="reaction ID" value="UER00043"/>
</dbReference>
<dbReference type="Proteomes" id="UP000002199">
    <property type="component" value="Chromosome"/>
</dbReference>
<dbReference type="GO" id="GO:0005829">
    <property type="term" value="C:cytosol"/>
    <property type="evidence" value="ECO:0007669"/>
    <property type="project" value="TreeGrafter"/>
</dbReference>
<dbReference type="GO" id="GO:0004048">
    <property type="term" value="F:anthranilate phosphoribosyltransferase activity"/>
    <property type="evidence" value="ECO:0007669"/>
    <property type="project" value="UniProtKB-UniRule"/>
</dbReference>
<dbReference type="GO" id="GO:0004425">
    <property type="term" value="F:indole-3-glycerol-phosphate synthase activity"/>
    <property type="evidence" value="ECO:0007669"/>
    <property type="project" value="UniProtKB-EC"/>
</dbReference>
<dbReference type="GO" id="GO:0000287">
    <property type="term" value="F:magnesium ion binding"/>
    <property type="evidence" value="ECO:0007669"/>
    <property type="project" value="UniProtKB-UniRule"/>
</dbReference>
<dbReference type="GO" id="GO:0000162">
    <property type="term" value="P:L-tryptophan biosynthetic process"/>
    <property type="evidence" value="ECO:0007669"/>
    <property type="project" value="UniProtKB-UniRule"/>
</dbReference>
<dbReference type="CDD" id="cd00331">
    <property type="entry name" value="IGPS"/>
    <property type="match status" value="1"/>
</dbReference>
<dbReference type="Gene3D" id="3.20.20.70">
    <property type="entry name" value="Aldolase class I"/>
    <property type="match status" value="1"/>
</dbReference>
<dbReference type="Gene3D" id="3.40.1030.10">
    <property type="entry name" value="Nucleoside phosphorylase/phosphoribosyltransferase catalytic domain"/>
    <property type="match status" value="1"/>
</dbReference>
<dbReference type="Gene3D" id="1.20.970.10">
    <property type="entry name" value="Transferase, Pyrimidine Nucleoside Phosphorylase, Chain C"/>
    <property type="match status" value="1"/>
</dbReference>
<dbReference type="HAMAP" id="MF_00211">
    <property type="entry name" value="TrpD"/>
    <property type="match status" value="1"/>
</dbReference>
<dbReference type="InterPro" id="IPR013785">
    <property type="entry name" value="Aldolase_TIM"/>
</dbReference>
<dbReference type="InterPro" id="IPR005940">
    <property type="entry name" value="Anthranilate_Pribosyl_Tfrase"/>
</dbReference>
<dbReference type="InterPro" id="IPR000312">
    <property type="entry name" value="Glycosyl_Trfase_fam3"/>
</dbReference>
<dbReference type="InterPro" id="IPR013798">
    <property type="entry name" value="Indole-3-glycerol_P_synth_dom"/>
</dbReference>
<dbReference type="InterPro" id="IPR035902">
    <property type="entry name" value="Nuc_phospho_transferase"/>
</dbReference>
<dbReference type="InterPro" id="IPR011060">
    <property type="entry name" value="RibuloseP-bd_barrel"/>
</dbReference>
<dbReference type="NCBIfam" id="TIGR01245">
    <property type="entry name" value="trpD"/>
    <property type="match status" value="1"/>
</dbReference>
<dbReference type="PANTHER" id="PTHR43285">
    <property type="entry name" value="ANTHRANILATE PHOSPHORIBOSYLTRANSFERASE"/>
    <property type="match status" value="1"/>
</dbReference>
<dbReference type="PANTHER" id="PTHR43285:SF2">
    <property type="entry name" value="ANTHRANILATE PHOSPHORIBOSYLTRANSFERASE"/>
    <property type="match status" value="1"/>
</dbReference>
<dbReference type="Pfam" id="PF00591">
    <property type="entry name" value="Glycos_transf_3"/>
    <property type="match status" value="1"/>
</dbReference>
<dbReference type="Pfam" id="PF00218">
    <property type="entry name" value="IGPS"/>
    <property type="match status" value="1"/>
</dbReference>
<dbReference type="SUPFAM" id="SSF52418">
    <property type="entry name" value="Nucleoside phosphorylase/phosphoribosyltransferase catalytic domain"/>
    <property type="match status" value="1"/>
</dbReference>
<dbReference type="SUPFAM" id="SSF51366">
    <property type="entry name" value="Ribulose-phoshate binding barrel"/>
    <property type="match status" value="1"/>
</dbReference>
<sequence>MMDFGFVDSLKGASKRGKNAVIAEVKVRSPIHGDLLRGRRIEDILRAYEKAGAAAISYITAEQFSGNFETLKKIVGLTDLPVLRKDFIRGRKEVERTAEVEAAALLLIARHLKERTAEMVDFCFEHGIEPLVEVHHAEDLVYAENARAVLINNRDIDRMERDGGSIDVTAKIAEKIRAFKVSGSGIGSVEDLLFVLQYVDAALIGTAFMMAENTEEFVQTVCGGEKMIEDVLRGLDFDKAYELAKTLPELDEIKIAAVLAALEAKGYGAEVIAGFAKGVAEKSKIEIGKVMDTCGTGGDKTSSINVSTAVAIALSTVHPVAKHGNRAVSSKSGSADVLEALGVRIEMDEERARKMIAETNFAFLFAPLYHKSFARVAAVRRNLGIRTIFNVTGPLTNPARPEVQIVGVASEILLVEVAKAMSLLGRRAVVVYGSGMDEVNPNSSTDIAVVNGGVERLKLEPEDFGIERCRVLPCSSSGESAERIRAVFSGKGLKEDRRLIAINFATALFALGYEDLKENVEIFEEKVQSGELARKLEEIACKSTSM</sequence>
<reference key="1">
    <citation type="journal article" date="1997" name="Nature">
        <title>The complete genome sequence of the hyperthermophilic, sulphate-reducing archaeon Archaeoglobus fulgidus.</title>
        <authorList>
            <person name="Klenk H.-P."/>
            <person name="Clayton R.A."/>
            <person name="Tomb J.-F."/>
            <person name="White O."/>
            <person name="Nelson K.E."/>
            <person name="Ketchum K.A."/>
            <person name="Dodson R.J."/>
            <person name="Gwinn M.L."/>
            <person name="Hickey E.K."/>
            <person name="Peterson J.D."/>
            <person name="Richardson D.L."/>
            <person name="Kerlavage A.R."/>
            <person name="Graham D.E."/>
            <person name="Kyrpides N.C."/>
            <person name="Fleischmann R.D."/>
            <person name="Quackenbush J."/>
            <person name="Lee N.H."/>
            <person name="Sutton G.G."/>
            <person name="Gill S.R."/>
            <person name="Kirkness E.F."/>
            <person name="Dougherty B.A."/>
            <person name="McKenney K."/>
            <person name="Adams M.D."/>
            <person name="Loftus B.J."/>
            <person name="Peterson S.N."/>
            <person name="Reich C.I."/>
            <person name="McNeil L.K."/>
            <person name="Badger J.H."/>
            <person name="Glodek A."/>
            <person name="Zhou L."/>
            <person name="Overbeek R."/>
            <person name="Gocayne J.D."/>
            <person name="Weidman J.F."/>
            <person name="McDonald L.A."/>
            <person name="Utterback T.R."/>
            <person name="Cotton M.D."/>
            <person name="Spriggs T."/>
            <person name="Artiach P."/>
            <person name="Kaine B.P."/>
            <person name="Sykes S.M."/>
            <person name="Sadow P.W."/>
            <person name="D'Andrea K.P."/>
            <person name="Bowman C."/>
            <person name="Fujii C."/>
            <person name="Garland S.A."/>
            <person name="Mason T.M."/>
            <person name="Olsen G.J."/>
            <person name="Fraser C.M."/>
            <person name="Smith H.O."/>
            <person name="Woese C.R."/>
            <person name="Venter J.C."/>
        </authorList>
    </citation>
    <scope>NUCLEOTIDE SEQUENCE [LARGE SCALE GENOMIC DNA]</scope>
    <source>
        <strain>ATCC 49558 / DSM 4304 / JCM 9628 / NBRC 100126 / VC-16</strain>
    </source>
</reference>
<feature type="chain" id="PRO_0000154507" description="Tryptophan biosynthesis protein TrpCD">
    <location>
        <begin position="1"/>
        <end position="546"/>
    </location>
</feature>
<feature type="region of interest" description="Indole-3-glycerol phosphate synthase">
    <location>
        <begin position="1"/>
        <end position="226"/>
    </location>
</feature>
<feature type="region of interest" description="Anthranilate phosphoribosyltransferase">
    <location>
        <begin position="227"/>
        <end position="546"/>
    </location>
</feature>
<feature type="binding site" evidence="2">
    <location>
        <position position="295"/>
    </location>
    <ligand>
        <name>5-phospho-alpha-D-ribose 1-diphosphate</name>
        <dbReference type="ChEBI" id="CHEBI:58017"/>
    </ligand>
</feature>
<feature type="binding site" evidence="2">
    <location>
        <position position="295"/>
    </location>
    <ligand>
        <name>anthranilate</name>
        <dbReference type="ChEBI" id="CHEBI:16567"/>
        <label>1</label>
    </ligand>
</feature>
<feature type="binding site" evidence="2">
    <location>
        <begin position="298"/>
        <end position="299"/>
    </location>
    <ligand>
        <name>5-phospho-alpha-D-ribose 1-diphosphate</name>
        <dbReference type="ChEBI" id="CHEBI:58017"/>
    </ligand>
</feature>
<feature type="binding site" evidence="2">
    <location>
        <position position="303"/>
    </location>
    <ligand>
        <name>5-phospho-alpha-D-ribose 1-diphosphate</name>
        <dbReference type="ChEBI" id="CHEBI:58017"/>
    </ligand>
</feature>
<feature type="binding site" evidence="2">
    <location>
        <begin position="305"/>
        <end position="308"/>
    </location>
    <ligand>
        <name>5-phospho-alpha-D-ribose 1-diphosphate</name>
        <dbReference type="ChEBI" id="CHEBI:58017"/>
    </ligand>
</feature>
<feature type="binding site" evidence="2">
    <location>
        <position position="307"/>
    </location>
    <ligand>
        <name>Mg(2+)</name>
        <dbReference type="ChEBI" id="CHEBI:18420"/>
        <label>1</label>
    </ligand>
</feature>
<feature type="binding site" evidence="2">
    <location>
        <begin position="322"/>
        <end position="330"/>
    </location>
    <ligand>
        <name>5-phospho-alpha-D-ribose 1-diphosphate</name>
        <dbReference type="ChEBI" id="CHEBI:58017"/>
    </ligand>
</feature>
<feature type="binding site" evidence="2">
    <location>
        <position position="325"/>
    </location>
    <ligand>
        <name>anthranilate</name>
        <dbReference type="ChEBI" id="CHEBI:16567"/>
        <label>1</label>
    </ligand>
</feature>
<feature type="binding site" evidence="2">
    <location>
        <position position="334"/>
    </location>
    <ligand>
        <name>5-phospho-alpha-D-ribose 1-diphosphate</name>
        <dbReference type="ChEBI" id="CHEBI:58017"/>
    </ligand>
</feature>
<feature type="binding site" evidence="2">
    <location>
        <position position="380"/>
    </location>
    <ligand>
        <name>anthranilate</name>
        <dbReference type="ChEBI" id="CHEBI:16567"/>
        <label>2</label>
    </ligand>
</feature>
<feature type="binding site" evidence="2">
    <location>
        <position position="437"/>
    </location>
    <ligand>
        <name>Mg(2+)</name>
        <dbReference type="ChEBI" id="CHEBI:18420"/>
        <label>2</label>
    </ligand>
</feature>
<feature type="binding site" evidence="2">
    <location>
        <position position="438"/>
    </location>
    <ligand>
        <name>Mg(2+)</name>
        <dbReference type="ChEBI" id="CHEBI:18420"/>
        <label>1</label>
    </ligand>
</feature>
<feature type="binding site" evidence="2">
    <location>
        <position position="438"/>
    </location>
    <ligand>
        <name>Mg(2+)</name>
        <dbReference type="ChEBI" id="CHEBI:18420"/>
        <label>2</label>
    </ligand>
</feature>
<organism>
    <name type="scientific">Archaeoglobus fulgidus (strain ATCC 49558 / DSM 4304 / JCM 9628 / NBRC 100126 / VC-16)</name>
    <dbReference type="NCBI Taxonomy" id="224325"/>
    <lineage>
        <taxon>Archaea</taxon>
        <taxon>Methanobacteriati</taxon>
        <taxon>Methanobacteriota</taxon>
        <taxon>Archaeoglobi</taxon>
        <taxon>Archaeoglobales</taxon>
        <taxon>Archaeoglobaceae</taxon>
        <taxon>Archaeoglobus</taxon>
    </lineage>
</organism>
<comment type="function">
    <text evidence="1">Bifunctional enzyme that catalyzes the second and fourth steps of tryptophan biosynthetic pathway. The second step is catalyzed by the anthranilate phosphoribosyltransferase, coded by the TrpD domain and the fourth step is catalyzed by indole-3-glycerol phosphate synthase, coded by the TrpC domain (By similarity).</text>
</comment>
<comment type="catalytic activity">
    <reaction>
        <text>1-(2-carboxyphenylamino)-1-deoxy-D-ribulose 5-phosphate + H(+) = (1S,2R)-1-C-(indol-3-yl)glycerol 3-phosphate + CO2 + H2O</text>
        <dbReference type="Rhea" id="RHEA:23476"/>
        <dbReference type="ChEBI" id="CHEBI:15377"/>
        <dbReference type="ChEBI" id="CHEBI:15378"/>
        <dbReference type="ChEBI" id="CHEBI:16526"/>
        <dbReference type="ChEBI" id="CHEBI:58613"/>
        <dbReference type="ChEBI" id="CHEBI:58866"/>
        <dbReference type="EC" id="4.1.1.48"/>
    </reaction>
</comment>
<comment type="catalytic activity">
    <reaction evidence="2">
        <text>N-(5-phospho-beta-D-ribosyl)anthranilate + diphosphate = 5-phospho-alpha-D-ribose 1-diphosphate + anthranilate</text>
        <dbReference type="Rhea" id="RHEA:11768"/>
        <dbReference type="ChEBI" id="CHEBI:16567"/>
        <dbReference type="ChEBI" id="CHEBI:18277"/>
        <dbReference type="ChEBI" id="CHEBI:33019"/>
        <dbReference type="ChEBI" id="CHEBI:58017"/>
        <dbReference type="EC" id="2.4.2.18"/>
    </reaction>
</comment>
<comment type="cofactor">
    <cofactor evidence="2">
        <name>Mg(2+)</name>
        <dbReference type="ChEBI" id="CHEBI:18420"/>
    </cofactor>
    <text evidence="2">Binds 2 magnesium ions per monomer.</text>
</comment>
<comment type="pathway">
    <text evidence="2">Amino-acid biosynthesis; L-tryptophan biosynthesis; L-tryptophan from chorismate: step 2/5.</text>
</comment>
<comment type="pathway">
    <text>Amino-acid biosynthesis; L-tryptophan biosynthesis; L-tryptophan from chorismate: step 4/5.</text>
</comment>
<comment type="similarity">
    <text evidence="3">In the N-terminal section; belongs to the TrpC family.</text>
</comment>
<comment type="similarity">
    <text evidence="3">In the C-terminal section; belongs to the anthranilate phosphoribosyltransferase family.</text>
</comment>
<gene>
    <name type="primary">trpCD</name>
    <name type="ordered locus">AF_1604</name>
</gene>